<name>YXCD_BACSU</name>
<reference key="1">
    <citation type="journal article" date="1995" name="DNA Res.">
        <title>Cloning and sequencing of a 36-kb region of the Bacillus subtilis genome between the gnt and iol operons.</title>
        <authorList>
            <person name="Yoshida K."/>
            <person name="Seki S."/>
            <person name="Fujimura M."/>
            <person name="Miwa Y."/>
            <person name="Fujita Y."/>
        </authorList>
    </citation>
    <scope>NUCLEOTIDE SEQUENCE [GENOMIC DNA]</scope>
    <source>
        <strain>168 / BGSC1A1</strain>
    </source>
</reference>
<reference key="2">
    <citation type="journal article" date="1997" name="Nature">
        <title>The complete genome sequence of the Gram-positive bacterium Bacillus subtilis.</title>
        <authorList>
            <person name="Kunst F."/>
            <person name="Ogasawara N."/>
            <person name="Moszer I."/>
            <person name="Albertini A.M."/>
            <person name="Alloni G."/>
            <person name="Azevedo V."/>
            <person name="Bertero M.G."/>
            <person name="Bessieres P."/>
            <person name="Bolotin A."/>
            <person name="Borchert S."/>
            <person name="Borriss R."/>
            <person name="Boursier L."/>
            <person name="Brans A."/>
            <person name="Braun M."/>
            <person name="Brignell S.C."/>
            <person name="Bron S."/>
            <person name="Brouillet S."/>
            <person name="Bruschi C.V."/>
            <person name="Caldwell B."/>
            <person name="Capuano V."/>
            <person name="Carter N.M."/>
            <person name="Choi S.-K."/>
            <person name="Codani J.-J."/>
            <person name="Connerton I.F."/>
            <person name="Cummings N.J."/>
            <person name="Daniel R.A."/>
            <person name="Denizot F."/>
            <person name="Devine K.M."/>
            <person name="Duesterhoeft A."/>
            <person name="Ehrlich S.D."/>
            <person name="Emmerson P.T."/>
            <person name="Entian K.-D."/>
            <person name="Errington J."/>
            <person name="Fabret C."/>
            <person name="Ferrari E."/>
            <person name="Foulger D."/>
            <person name="Fritz C."/>
            <person name="Fujita M."/>
            <person name="Fujita Y."/>
            <person name="Fuma S."/>
            <person name="Galizzi A."/>
            <person name="Galleron N."/>
            <person name="Ghim S.-Y."/>
            <person name="Glaser P."/>
            <person name="Goffeau A."/>
            <person name="Golightly E.J."/>
            <person name="Grandi G."/>
            <person name="Guiseppi G."/>
            <person name="Guy B.J."/>
            <person name="Haga K."/>
            <person name="Haiech J."/>
            <person name="Harwood C.R."/>
            <person name="Henaut A."/>
            <person name="Hilbert H."/>
            <person name="Holsappel S."/>
            <person name="Hosono S."/>
            <person name="Hullo M.-F."/>
            <person name="Itaya M."/>
            <person name="Jones L.-M."/>
            <person name="Joris B."/>
            <person name="Karamata D."/>
            <person name="Kasahara Y."/>
            <person name="Klaerr-Blanchard M."/>
            <person name="Klein C."/>
            <person name="Kobayashi Y."/>
            <person name="Koetter P."/>
            <person name="Koningstein G."/>
            <person name="Krogh S."/>
            <person name="Kumano M."/>
            <person name="Kurita K."/>
            <person name="Lapidus A."/>
            <person name="Lardinois S."/>
            <person name="Lauber J."/>
            <person name="Lazarevic V."/>
            <person name="Lee S.-M."/>
            <person name="Levine A."/>
            <person name="Liu H."/>
            <person name="Masuda S."/>
            <person name="Mauel C."/>
            <person name="Medigue C."/>
            <person name="Medina N."/>
            <person name="Mellado R.P."/>
            <person name="Mizuno M."/>
            <person name="Moestl D."/>
            <person name="Nakai S."/>
            <person name="Noback M."/>
            <person name="Noone D."/>
            <person name="O'Reilly M."/>
            <person name="Ogawa K."/>
            <person name="Ogiwara A."/>
            <person name="Oudega B."/>
            <person name="Park S.-H."/>
            <person name="Parro V."/>
            <person name="Pohl T.M."/>
            <person name="Portetelle D."/>
            <person name="Porwollik S."/>
            <person name="Prescott A.M."/>
            <person name="Presecan E."/>
            <person name="Pujic P."/>
            <person name="Purnelle B."/>
            <person name="Rapoport G."/>
            <person name="Rey M."/>
            <person name="Reynolds S."/>
            <person name="Rieger M."/>
            <person name="Rivolta C."/>
            <person name="Rocha E."/>
            <person name="Roche B."/>
            <person name="Rose M."/>
            <person name="Sadaie Y."/>
            <person name="Sato T."/>
            <person name="Scanlan E."/>
            <person name="Schleich S."/>
            <person name="Schroeter R."/>
            <person name="Scoffone F."/>
            <person name="Sekiguchi J."/>
            <person name="Sekowska A."/>
            <person name="Seror S.J."/>
            <person name="Serror P."/>
            <person name="Shin B.-S."/>
            <person name="Soldo B."/>
            <person name="Sorokin A."/>
            <person name="Tacconi E."/>
            <person name="Takagi T."/>
            <person name="Takahashi H."/>
            <person name="Takemaru K."/>
            <person name="Takeuchi M."/>
            <person name="Tamakoshi A."/>
            <person name="Tanaka T."/>
            <person name="Terpstra P."/>
            <person name="Tognoni A."/>
            <person name="Tosato V."/>
            <person name="Uchiyama S."/>
            <person name="Vandenbol M."/>
            <person name="Vannier F."/>
            <person name="Vassarotti A."/>
            <person name="Viari A."/>
            <person name="Wambutt R."/>
            <person name="Wedler E."/>
            <person name="Wedler H."/>
            <person name="Weitzenegger T."/>
            <person name="Winters P."/>
            <person name="Wipat A."/>
            <person name="Yamamoto H."/>
            <person name="Yamane K."/>
            <person name="Yasumoto K."/>
            <person name="Yata K."/>
            <person name="Yoshida K."/>
            <person name="Yoshikawa H.-F."/>
            <person name="Zumstein E."/>
            <person name="Yoshikawa H."/>
            <person name="Danchin A."/>
        </authorList>
    </citation>
    <scope>NUCLEOTIDE SEQUENCE [LARGE SCALE GENOMIC DNA]</scope>
    <source>
        <strain>168</strain>
    </source>
</reference>
<organism>
    <name type="scientific">Bacillus subtilis (strain 168)</name>
    <dbReference type="NCBI Taxonomy" id="224308"/>
    <lineage>
        <taxon>Bacteria</taxon>
        <taxon>Bacillati</taxon>
        <taxon>Bacillota</taxon>
        <taxon>Bacilli</taxon>
        <taxon>Bacillales</taxon>
        <taxon>Bacillaceae</taxon>
        <taxon>Bacillus</taxon>
    </lineage>
</organism>
<protein>
    <recommendedName>
        <fullName>Uncharacterized protein YxcD</fullName>
    </recommendedName>
</protein>
<gene>
    <name type="primary">yxcD</name>
    <name type="ordered locus">BSU39800</name>
    <name type="ORF">SS92CR</name>
</gene>
<proteinExistence type="predicted"/>
<sequence>MRLILNEQEIVDGICVYISNEEDIYPEDVEVKELSYNKRTGFFAEATFGLHHKQLMSDDISEGIIQFLEEYHNFNPDVTVVELQFDKKKGFSALVFVNEAEE</sequence>
<feature type="chain" id="PRO_0000050009" description="Uncharacterized protein YxcD">
    <location>
        <begin position="1"/>
        <end position="102"/>
    </location>
</feature>
<dbReference type="EMBL" id="AB005554">
    <property type="protein sequence ID" value="BAA21605.1"/>
    <property type="molecule type" value="Genomic_DNA"/>
</dbReference>
<dbReference type="EMBL" id="AL009126">
    <property type="protein sequence ID" value="CAB16016.1"/>
    <property type="molecule type" value="Genomic_DNA"/>
</dbReference>
<dbReference type="PIR" id="E70073">
    <property type="entry name" value="E70073"/>
</dbReference>
<dbReference type="RefSeq" id="NP_391859.1">
    <property type="nucleotide sequence ID" value="NC_000964.3"/>
</dbReference>
<dbReference type="RefSeq" id="WP_003227046.1">
    <property type="nucleotide sequence ID" value="NZ_OZ025638.1"/>
</dbReference>
<dbReference type="SMR" id="P46334"/>
<dbReference type="FunCoup" id="P46334">
    <property type="interactions" value="118"/>
</dbReference>
<dbReference type="STRING" id="224308.BSU39800"/>
<dbReference type="PaxDb" id="224308-BSU39800"/>
<dbReference type="EnsemblBacteria" id="CAB16016">
    <property type="protein sequence ID" value="CAB16016"/>
    <property type="gene ID" value="BSU_39800"/>
</dbReference>
<dbReference type="GeneID" id="937638"/>
<dbReference type="KEGG" id="bsu:BSU39800"/>
<dbReference type="PATRIC" id="fig|224308.179.peg.4306"/>
<dbReference type="InParanoid" id="P46334"/>
<dbReference type="OrthoDB" id="2360753at2"/>
<dbReference type="BioCyc" id="BSUB:BSU39800-MONOMER"/>
<dbReference type="Proteomes" id="UP000001570">
    <property type="component" value="Chromosome"/>
</dbReference>
<dbReference type="InterPro" id="IPR020516">
    <property type="entry name" value="Uncharacterised_YxcD"/>
</dbReference>
<dbReference type="Pfam" id="PF10850">
    <property type="entry name" value="DUF2653"/>
    <property type="match status" value="1"/>
</dbReference>
<keyword id="KW-1185">Reference proteome</keyword>
<accession>P46334</accession>